<dbReference type="EMBL" id="AE004092">
    <property type="protein sequence ID" value="AAK33196.1"/>
    <property type="molecule type" value="Genomic_DNA"/>
</dbReference>
<dbReference type="EMBL" id="CP000017">
    <property type="protein sequence ID" value="AAZ50677.1"/>
    <property type="molecule type" value="Genomic_DNA"/>
</dbReference>
<dbReference type="RefSeq" id="NP_268474.1">
    <property type="nucleotide sequence ID" value="NC_002737.2"/>
</dbReference>
<dbReference type="SMR" id="P66634"/>
<dbReference type="PaxDb" id="1314-HKU360_00091"/>
<dbReference type="KEGG" id="spy:SPy_0065"/>
<dbReference type="KEGG" id="spz:M5005_Spy0058"/>
<dbReference type="PATRIC" id="fig|160490.10.peg.58"/>
<dbReference type="HOGENOM" id="CLU_098428_0_2_9"/>
<dbReference type="OMA" id="NSAYHDT"/>
<dbReference type="PRO" id="PR:P66634"/>
<dbReference type="Proteomes" id="UP000000750">
    <property type="component" value="Chromosome"/>
</dbReference>
<dbReference type="GO" id="GO:1990904">
    <property type="term" value="C:ribonucleoprotein complex"/>
    <property type="evidence" value="ECO:0007669"/>
    <property type="project" value="UniProtKB-KW"/>
</dbReference>
<dbReference type="GO" id="GO:0005840">
    <property type="term" value="C:ribosome"/>
    <property type="evidence" value="ECO:0007669"/>
    <property type="project" value="UniProtKB-KW"/>
</dbReference>
<dbReference type="GO" id="GO:0019843">
    <property type="term" value="F:rRNA binding"/>
    <property type="evidence" value="ECO:0007669"/>
    <property type="project" value="UniProtKB-UniRule"/>
</dbReference>
<dbReference type="GO" id="GO:0003735">
    <property type="term" value="F:structural constituent of ribosome"/>
    <property type="evidence" value="ECO:0007669"/>
    <property type="project" value="InterPro"/>
</dbReference>
<dbReference type="GO" id="GO:0006412">
    <property type="term" value="P:translation"/>
    <property type="evidence" value="ECO:0007669"/>
    <property type="project" value="UniProtKB-UniRule"/>
</dbReference>
<dbReference type="FunFam" id="3.30.1370.30:FF:000002">
    <property type="entry name" value="30S ribosomal protein S8"/>
    <property type="match status" value="1"/>
</dbReference>
<dbReference type="FunFam" id="3.30.1490.10:FF:000001">
    <property type="entry name" value="30S ribosomal protein S8"/>
    <property type="match status" value="1"/>
</dbReference>
<dbReference type="Gene3D" id="3.30.1370.30">
    <property type="match status" value="1"/>
</dbReference>
<dbReference type="Gene3D" id="3.30.1490.10">
    <property type="match status" value="1"/>
</dbReference>
<dbReference type="HAMAP" id="MF_01302_B">
    <property type="entry name" value="Ribosomal_uS8_B"/>
    <property type="match status" value="1"/>
</dbReference>
<dbReference type="InterPro" id="IPR000630">
    <property type="entry name" value="Ribosomal_uS8"/>
</dbReference>
<dbReference type="InterPro" id="IPR047863">
    <property type="entry name" value="Ribosomal_uS8_CS"/>
</dbReference>
<dbReference type="InterPro" id="IPR035987">
    <property type="entry name" value="Ribosomal_uS8_sf"/>
</dbReference>
<dbReference type="NCBIfam" id="NF001109">
    <property type="entry name" value="PRK00136.1"/>
    <property type="match status" value="1"/>
</dbReference>
<dbReference type="PANTHER" id="PTHR11758">
    <property type="entry name" value="40S RIBOSOMAL PROTEIN S15A"/>
    <property type="match status" value="1"/>
</dbReference>
<dbReference type="Pfam" id="PF00410">
    <property type="entry name" value="Ribosomal_S8"/>
    <property type="match status" value="1"/>
</dbReference>
<dbReference type="SUPFAM" id="SSF56047">
    <property type="entry name" value="Ribosomal protein S8"/>
    <property type="match status" value="1"/>
</dbReference>
<dbReference type="PROSITE" id="PS00053">
    <property type="entry name" value="RIBOSOMAL_S8"/>
    <property type="match status" value="1"/>
</dbReference>
<proteinExistence type="inferred from homology"/>
<sequence>MVMTDPIADFLTRIRNANQVKHEVLEVPASNIKKGIAEILKREGFVKNVEVIEDDKQGIIRVFLKYGKNGERVITNLKRISKPGLRVYAKRDDMPKVLNGLGIAIISTSEGLLTDKEARQKNVGGEVIAYVW</sequence>
<protein>
    <recommendedName>
        <fullName evidence="1">Small ribosomal subunit protein uS8</fullName>
    </recommendedName>
    <alternativeName>
        <fullName evidence="2">30S ribosomal protein S8</fullName>
    </alternativeName>
</protein>
<feature type="chain" id="PRO_0000126498" description="Small ribosomal subunit protein uS8">
    <location>
        <begin position="1"/>
        <end position="132"/>
    </location>
</feature>
<organism>
    <name type="scientific">Streptococcus pyogenes serotype M1</name>
    <dbReference type="NCBI Taxonomy" id="301447"/>
    <lineage>
        <taxon>Bacteria</taxon>
        <taxon>Bacillati</taxon>
        <taxon>Bacillota</taxon>
        <taxon>Bacilli</taxon>
        <taxon>Lactobacillales</taxon>
        <taxon>Streptococcaceae</taxon>
        <taxon>Streptococcus</taxon>
    </lineage>
</organism>
<evidence type="ECO:0000255" key="1">
    <source>
        <dbReference type="HAMAP-Rule" id="MF_01302"/>
    </source>
</evidence>
<evidence type="ECO:0000305" key="2"/>
<accession>P66634</accession>
<accession>Q491P1</accession>
<accession>Q9A1W0</accession>
<reference key="1">
    <citation type="journal article" date="2001" name="Proc. Natl. Acad. Sci. U.S.A.">
        <title>Complete genome sequence of an M1 strain of Streptococcus pyogenes.</title>
        <authorList>
            <person name="Ferretti J.J."/>
            <person name="McShan W.M."/>
            <person name="Ajdic D.J."/>
            <person name="Savic D.J."/>
            <person name="Savic G."/>
            <person name="Lyon K."/>
            <person name="Primeaux C."/>
            <person name="Sezate S."/>
            <person name="Suvorov A.N."/>
            <person name="Kenton S."/>
            <person name="Lai H.S."/>
            <person name="Lin S.P."/>
            <person name="Qian Y."/>
            <person name="Jia H.G."/>
            <person name="Najar F.Z."/>
            <person name="Ren Q."/>
            <person name="Zhu H."/>
            <person name="Song L."/>
            <person name="White J."/>
            <person name="Yuan X."/>
            <person name="Clifton S.W."/>
            <person name="Roe B.A."/>
            <person name="McLaughlin R.E."/>
        </authorList>
    </citation>
    <scope>NUCLEOTIDE SEQUENCE [LARGE SCALE GENOMIC DNA]</scope>
    <source>
        <strain>ATCC 700294 / SF370 / Serotype M1</strain>
    </source>
</reference>
<reference key="2">
    <citation type="journal article" date="2005" name="J. Infect. Dis.">
        <title>Evolutionary origin and emergence of a highly successful clone of serotype M1 group A Streptococcus involved multiple horizontal gene transfer events.</title>
        <authorList>
            <person name="Sumby P."/>
            <person name="Porcella S.F."/>
            <person name="Madrigal A.G."/>
            <person name="Barbian K.D."/>
            <person name="Virtaneva K."/>
            <person name="Ricklefs S.M."/>
            <person name="Sturdevant D.E."/>
            <person name="Graham M.R."/>
            <person name="Vuopio-Varkila J."/>
            <person name="Hoe N.P."/>
            <person name="Musser J.M."/>
        </authorList>
    </citation>
    <scope>NUCLEOTIDE SEQUENCE [LARGE SCALE GENOMIC DNA]</scope>
    <source>
        <strain>ATCC BAA-947 / MGAS5005 / Serotype M1</strain>
    </source>
</reference>
<gene>
    <name evidence="1" type="primary">rpsH</name>
    <name type="ordered locus">SPy_0065</name>
    <name type="ordered locus">M5005_Spy0058</name>
</gene>
<name>RS8_STRP1</name>
<keyword id="KW-1185">Reference proteome</keyword>
<keyword id="KW-0687">Ribonucleoprotein</keyword>
<keyword id="KW-0689">Ribosomal protein</keyword>
<keyword id="KW-0694">RNA-binding</keyword>
<keyword id="KW-0699">rRNA-binding</keyword>
<comment type="function">
    <text evidence="1">One of the primary rRNA binding proteins, it binds directly to 16S rRNA central domain where it helps coordinate assembly of the platform of the 30S subunit.</text>
</comment>
<comment type="subunit">
    <text evidence="1">Part of the 30S ribosomal subunit. Contacts proteins S5 and S12.</text>
</comment>
<comment type="similarity">
    <text evidence="1">Belongs to the universal ribosomal protein uS8 family.</text>
</comment>